<organism>
    <name type="scientific">Staphylococcus aureus (strain USA300)</name>
    <dbReference type="NCBI Taxonomy" id="367830"/>
    <lineage>
        <taxon>Bacteria</taxon>
        <taxon>Bacillati</taxon>
        <taxon>Bacillota</taxon>
        <taxon>Bacilli</taxon>
        <taxon>Bacillales</taxon>
        <taxon>Staphylococcaceae</taxon>
        <taxon>Staphylococcus</taxon>
    </lineage>
</organism>
<proteinExistence type="evidence at protein level"/>
<sequence>MAIVGTIIKIIKAIIDIFAK</sequence>
<comment type="function">
    <text evidence="1">Peptide which can recruit, activate and subsequently lyse human neutrophils, thus eliminating the main cellular defense against infection. Stimulates the secretion of the chemotactic factor interleukin-8 (IL-8). The ensuing activation process triggers an inflammatory response in the host, thus contributing greatly to virulence. Also possesses hemolytic activity, which may contribute to the development of disease.</text>
</comment>
<comment type="induction">
    <text evidence="1">Up-regulated by agr.</text>
</comment>
<comment type="miscellaneous">
    <text>Peptide production is higher in most prevalent community-associated MRSA strains than in hospital-associated MRSA strains.</text>
</comment>
<comment type="similarity">
    <text evidence="2">Belongs to the phenol-soluble modulin alpha peptides family.</text>
</comment>
<protein>
    <recommendedName>
        <fullName>Phenol-soluble modulin alpha 4 peptide</fullName>
    </recommendedName>
</protein>
<accession>P0C817</accession>
<keyword id="KW-0204">Cytolysis</keyword>
<keyword id="KW-0843">Virulence</keyword>
<reference key="1">
    <citation type="journal article" date="2006" name="Lancet">
        <title>Complete genome sequence of USA300, an epidemic clone of community-acquired meticillin-resistant Staphylococcus aureus.</title>
        <authorList>
            <person name="Diep B.A."/>
            <person name="Gill S.R."/>
            <person name="Chang R.F."/>
            <person name="Phan T.H."/>
            <person name="Chen J.H."/>
            <person name="Davidson M.G."/>
            <person name="Lin F."/>
            <person name="Lin J."/>
            <person name="Carleton H.A."/>
            <person name="Mongodin E.F."/>
            <person name="Sensabaugh G.F."/>
            <person name="Perdreau-Remington F."/>
        </authorList>
    </citation>
    <scope>NUCLEOTIDE SEQUENCE [LARGE SCALE GENOMIC DNA]</scope>
    <source>
        <strain>USA300</strain>
    </source>
</reference>
<reference key="2">
    <citation type="journal article" date="2007" name="Nat. Med.">
        <title>Identification of novel cytolytic peptides as key virulence determinants for community-associated MRSA.</title>
        <authorList>
            <person name="Wang R."/>
            <person name="Braughton K.R."/>
            <person name="Kretschmer D."/>
            <person name="Bach T.-H.L."/>
            <person name="Queck S.Y."/>
            <person name="Li M."/>
            <person name="Kennedy A.D."/>
            <person name="Dorward D.W."/>
            <person name="Klebanoff S.J."/>
            <person name="Peschel A."/>
            <person name="DeLeo F.R."/>
            <person name="Otto M."/>
        </authorList>
    </citation>
    <scope>FUNCTION AS A VIRULENCE FACTOR</scope>
    <scope>IDENTIFICATION BY MASS SPECTROMETRY</scope>
    <scope>INDUCTION BY AGR</scope>
</reference>
<dbReference type="EMBL" id="CP000255">
    <property type="status" value="NOT_ANNOTATED_CDS"/>
    <property type="molecule type" value="Genomic_DNA"/>
</dbReference>
<dbReference type="SMR" id="P0C817"/>
<dbReference type="PHI-base" id="PHI:6669"/>
<dbReference type="Proteomes" id="UP000001939">
    <property type="component" value="Chromosome"/>
</dbReference>
<dbReference type="GO" id="GO:0031640">
    <property type="term" value="P:killing of cells of another organism"/>
    <property type="evidence" value="ECO:0007669"/>
    <property type="project" value="UniProtKB-KW"/>
</dbReference>
<dbReference type="InterPro" id="IPR031429">
    <property type="entry name" value="PSM_alpha"/>
</dbReference>
<dbReference type="Pfam" id="PF17063">
    <property type="entry name" value="PSMalpha"/>
    <property type="match status" value="1"/>
</dbReference>
<evidence type="ECO:0000269" key="1">
    <source>
    </source>
</evidence>
<evidence type="ECO:0000305" key="2"/>
<name>PSMA4_STAA3</name>
<feature type="peptide" id="PRO_0000345073" description="Phenol-soluble modulin alpha 4 peptide">
    <location>
        <begin position="1"/>
        <end position="20"/>
    </location>
</feature>
<gene>
    <name type="primary">psmA4</name>
    <name type="ordered locus">SAUSA300_0424.1</name>
</gene>